<name>ACSF2_RAT</name>
<organism>
    <name type="scientific">Rattus norvegicus</name>
    <name type="common">Rat</name>
    <dbReference type="NCBI Taxonomy" id="10116"/>
    <lineage>
        <taxon>Eukaryota</taxon>
        <taxon>Metazoa</taxon>
        <taxon>Chordata</taxon>
        <taxon>Craniata</taxon>
        <taxon>Vertebrata</taxon>
        <taxon>Euteleostomi</taxon>
        <taxon>Mammalia</taxon>
        <taxon>Eutheria</taxon>
        <taxon>Euarchontoglires</taxon>
        <taxon>Glires</taxon>
        <taxon>Rodentia</taxon>
        <taxon>Myomorpha</taxon>
        <taxon>Muroidea</taxon>
        <taxon>Muridae</taxon>
        <taxon>Murinae</taxon>
        <taxon>Rattus</taxon>
    </lineage>
</organism>
<sequence>MAVYLGMLRLGRLCVASLGARGPRTPLSRPWPNSKLQGVRAFSSGMVDCTNPLPIGGLSYIQGHTDSHLVNKTVGECLDATAQRFPNREALVIIHENIRLNFAQLKEEVDRAASGLLSIGLRKGDRLGMWGPNSYAWVLIQLATAQAGIILVSVNPAYQASELEYVLRKVGCKGIVFPKQFKTQQYYNILKQVCPELEKAQPGALKSERLPDLTTVISVDAPLPGTLLLDEVVAAGGKEQNLAQLRYHQGFLSCYDPINIQFTSGTTGNPKGATLSHHNIVNNSNLIGQRLKMPAKTAEELRMVLPCPLYHCLGSVGGTMVSVVHGATLLLSSPSFNGKKALEAISREKGTLLYGTPTMFVDILNQPDFSSYDFTTIRGGVIAGSLAPPELIRAIISKMNMKELVVVYGTTENSPVTFMNFPEDTLEQKAGSVGRIMPHTEAQIVNMETGELTKLNMPGELCIRGYCVMQGYWGEPQKTFETVGQDRWYRTGDIASMDEQGFCRIVGRSKDMIIRGGENIYPAELEDFFHKHPQVQEAQVVGVKDDRMGEEICACIRLKSGETTTEEEIKAFCKGKISHFKIPRYIVFVEGYPLTVSGKIQKFKLREQMEQHLKL</sequence>
<proteinExistence type="evidence at transcript level"/>
<protein>
    <recommendedName>
        <fullName evidence="5">Medium-chain acyl-CoA ligase ACSF2, mitochondrial</fullName>
        <ecNumber evidence="3">6.2.1.2</ecNumber>
    </recommendedName>
</protein>
<evidence type="ECO:0000250" key="1"/>
<evidence type="ECO:0000250" key="2">
    <source>
        <dbReference type="UniProtKB" id="Q8VCW8"/>
    </source>
</evidence>
<evidence type="ECO:0000250" key="3">
    <source>
        <dbReference type="UniProtKB" id="Q96CM8"/>
    </source>
</evidence>
<evidence type="ECO:0000255" key="4"/>
<evidence type="ECO:0000305" key="5"/>
<evidence type="ECO:0000312" key="6">
    <source>
        <dbReference type="RGD" id="1562656"/>
    </source>
</evidence>
<feature type="transit peptide" description="Mitochondrion" evidence="4">
    <location>
        <begin position="1"/>
        <end position="49"/>
    </location>
</feature>
<feature type="chain" id="PRO_0000315797" description="Medium-chain acyl-CoA ligase ACSF2, mitochondrial">
    <location>
        <begin position="50"/>
        <end position="615"/>
    </location>
</feature>
<feature type="binding site" evidence="1">
    <location>
        <begin position="263"/>
        <end position="271"/>
    </location>
    <ligand>
        <name>ATP</name>
        <dbReference type="ChEBI" id="CHEBI:30616"/>
    </ligand>
</feature>
<feature type="binding site" evidence="1">
    <location>
        <position position="493"/>
    </location>
    <ligand>
        <name>ATP</name>
        <dbReference type="ChEBI" id="CHEBI:30616"/>
    </ligand>
</feature>
<feature type="binding site" evidence="1">
    <location>
        <position position="508"/>
    </location>
    <ligand>
        <name>ATP</name>
        <dbReference type="ChEBI" id="CHEBI:30616"/>
    </ligand>
</feature>
<feature type="binding site" evidence="1">
    <location>
        <position position="599"/>
    </location>
    <ligand>
        <name>ATP</name>
        <dbReference type="ChEBI" id="CHEBI:30616"/>
    </ligand>
</feature>
<feature type="modified residue" description="N6-acetyllysine" evidence="2">
    <location>
        <position position="179"/>
    </location>
</feature>
<feature type="modified residue" description="N6-acetyllysine; alternate" evidence="2">
    <location>
        <position position="182"/>
    </location>
</feature>
<feature type="modified residue" description="N6-succinyllysine; alternate" evidence="2">
    <location>
        <position position="182"/>
    </location>
</feature>
<feature type="modified residue" description="N6-acetyllysine" evidence="2">
    <location>
        <position position="199"/>
    </location>
</feature>
<feature type="modified residue" description="N6-acetyllysine" evidence="2">
    <location>
        <position position="340"/>
    </location>
</feature>
<feature type="modified residue" description="N6-acetyllysine" evidence="2">
    <location>
        <position position="398"/>
    </location>
</feature>
<feature type="modified residue" description="N6-succinyllysine" evidence="2">
    <location>
        <position position="478"/>
    </location>
</feature>
<feature type="modified residue" description="N6-acetyllysine" evidence="2">
    <location>
        <position position="510"/>
    </location>
</feature>
<feature type="modified residue" description="N6-acetyllysine; alternate" evidence="2">
    <location>
        <position position="544"/>
    </location>
</feature>
<feature type="modified residue" description="N6-succinyllysine; alternate" evidence="2">
    <location>
        <position position="544"/>
    </location>
</feature>
<feature type="modified residue" description="N6-acetyllysine; alternate" evidence="2">
    <location>
        <position position="570"/>
    </location>
</feature>
<feature type="modified residue" description="N6-succinyllysine; alternate" evidence="2">
    <location>
        <position position="570"/>
    </location>
</feature>
<feature type="modified residue" description="N6-succinyllysine" evidence="2">
    <location>
        <position position="599"/>
    </location>
</feature>
<keyword id="KW-0007">Acetylation</keyword>
<keyword id="KW-0067">ATP-binding</keyword>
<keyword id="KW-0276">Fatty acid metabolism</keyword>
<keyword id="KW-0436">Ligase</keyword>
<keyword id="KW-0443">Lipid metabolism</keyword>
<keyword id="KW-0496">Mitochondrion</keyword>
<keyword id="KW-0547">Nucleotide-binding</keyword>
<keyword id="KW-1185">Reference proteome</keyword>
<keyword id="KW-0809">Transit peptide</keyword>
<accession>Q499N5</accession>
<gene>
    <name evidence="6" type="primary">Acsf2</name>
</gene>
<reference key="1">
    <citation type="journal article" date="2004" name="Genome Res.">
        <title>The status, quality, and expansion of the NIH full-length cDNA project: the Mammalian Gene Collection (MGC).</title>
        <authorList>
            <consortium name="The MGC Project Team"/>
        </authorList>
    </citation>
    <scope>NUCLEOTIDE SEQUENCE [LARGE SCALE MRNA]</scope>
    <source>
        <tissue>Prostate</tissue>
    </source>
</reference>
<dbReference type="EC" id="6.2.1.2" evidence="3"/>
<dbReference type="EMBL" id="BC099826">
    <property type="protein sequence ID" value="AAH99826.1"/>
    <property type="molecule type" value="mRNA"/>
</dbReference>
<dbReference type="RefSeq" id="NP_001030123.1">
    <property type="nucleotide sequence ID" value="NM_001034951.3"/>
</dbReference>
<dbReference type="SMR" id="Q499N5"/>
<dbReference type="BioGRID" id="565998">
    <property type="interactions" value="3"/>
</dbReference>
<dbReference type="FunCoup" id="Q499N5">
    <property type="interactions" value="941"/>
</dbReference>
<dbReference type="STRING" id="10116.ENSRNOP00000004673"/>
<dbReference type="GlyGen" id="Q499N5">
    <property type="glycosylation" value="2 sites, 1 O-linked glycan (2 sites)"/>
</dbReference>
<dbReference type="iPTMnet" id="Q499N5"/>
<dbReference type="PhosphoSitePlus" id="Q499N5"/>
<dbReference type="SwissPalm" id="Q499N5"/>
<dbReference type="PaxDb" id="10116-ENSRNOP00000004673"/>
<dbReference type="Ensembl" id="ENSRNOT00000004673.5">
    <property type="protein sequence ID" value="ENSRNOP00000004673.3"/>
    <property type="gene ID" value="ENSRNOG00000003330.5"/>
</dbReference>
<dbReference type="GeneID" id="619561"/>
<dbReference type="KEGG" id="rno:619561"/>
<dbReference type="UCSC" id="RGD:1562656">
    <property type="organism name" value="rat"/>
</dbReference>
<dbReference type="AGR" id="RGD:1562656"/>
<dbReference type="CTD" id="80221"/>
<dbReference type="RGD" id="1562656">
    <property type="gene designation" value="Acsf2"/>
</dbReference>
<dbReference type="eggNOG" id="KOG1177">
    <property type="taxonomic scope" value="Eukaryota"/>
</dbReference>
<dbReference type="GeneTree" id="ENSGT00940000156830"/>
<dbReference type="HOGENOM" id="CLU_000022_59_7_1"/>
<dbReference type="InParanoid" id="Q499N5"/>
<dbReference type="OMA" id="ICCRGYN"/>
<dbReference type="OrthoDB" id="10253115at2759"/>
<dbReference type="PhylomeDB" id="Q499N5"/>
<dbReference type="TreeFam" id="TF313466"/>
<dbReference type="Reactome" id="R-RNO-77289">
    <property type="pathway name" value="Mitochondrial Fatty Acid Beta-Oxidation"/>
</dbReference>
<dbReference type="PRO" id="PR:Q499N5"/>
<dbReference type="Proteomes" id="UP000002494">
    <property type="component" value="Chromosome 10"/>
</dbReference>
<dbReference type="Bgee" id="ENSRNOG00000003330">
    <property type="expression patterns" value="Expressed in heart and 18 other cell types or tissues"/>
</dbReference>
<dbReference type="GO" id="GO:0005739">
    <property type="term" value="C:mitochondrion"/>
    <property type="evidence" value="ECO:0007669"/>
    <property type="project" value="UniProtKB-SubCell"/>
</dbReference>
<dbReference type="GO" id="GO:0005524">
    <property type="term" value="F:ATP binding"/>
    <property type="evidence" value="ECO:0007669"/>
    <property type="project" value="UniProtKB-KW"/>
</dbReference>
<dbReference type="GO" id="GO:0031956">
    <property type="term" value="F:medium-chain fatty acid-CoA ligase activity"/>
    <property type="evidence" value="ECO:0000250"/>
    <property type="project" value="UniProtKB"/>
</dbReference>
<dbReference type="GO" id="GO:0006631">
    <property type="term" value="P:fatty acid metabolic process"/>
    <property type="evidence" value="ECO:0000318"/>
    <property type="project" value="GO_Central"/>
</dbReference>
<dbReference type="CDD" id="cd05917">
    <property type="entry name" value="FACL_like_2"/>
    <property type="match status" value="1"/>
</dbReference>
<dbReference type="FunFam" id="3.30.300.30:FF:000008">
    <property type="entry name" value="2,3-dihydroxybenzoate-AMP ligase"/>
    <property type="match status" value="1"/>
</dbReference>
<dbReference type="FunFam" id="3.40.50.12780:FF:000003">
    <property type="entry name" value="Long-chain-fatty-acid--CoA ligase FadD"/>
    <property type="match status" value="1"/>
</dbReference>
<dbReference type="Gene3D" id="3.30.300.30">
    <property type="match status" value="1"/>
</dbReference>
<dbReference type="Gene3D" id="3.40.50.12780">
    <property type="entry name" value="N-terminal domain of ligase-like"/>
    <property type="match status" value="1"/>
</dbReference>
<dbReference type="InterPro" id="IPR025110">
    <property type="entry name" value="AMP-bd_C"/>
</dbReference>
<dbReference type="InterPro" id="IPR045851">
    <property type="entry name" value="AMP-bd_C_sf"/>
</dbReference>
<dbReference type="InterPro" id="IPR020845">
    <property type="entry name" value="AMP-binding_CS"/>
</dbReference>
<dbReference type="InterPro" id="IPR000873">
    <property type="entry name" value="AMP-dep_synth/lig_dom"/>
</dbReference>
<dbReference type="InterPro" id="IPR042099">
    <property type="entry name" value="ANL_N_sf"/>
</dbReference>
<dbReference type="PANTHER" id="PTHR43201">
    <property type="entry name" value="ACYL-COA SYNTHETASE"/>
    <property type="match status" value="1"/>
</dbReference>
<dbReference type="PANTHER" id="PTHR43201:SF5">
    <property type="entry name" value="MEDIUM-CHAIN ACYL-COA LIGASE ACSF2, MITOCHONDRIAL"/>
    <property type="match status" value="1"/>
</dbReference>
<dbReference type="Pfam" id="PF00501">
    <property type="entry name" value="AMP-binding"/>
    <property type="match status" value="1"/>
</dbReference>
<dbReference type="Pfam" id="PF13193">
    <property type="entry name" value="AMP-binding_C"/>
    <property type="match status" value="1"/>
</dbReference>
<dbReference type="SUPFAM" id="SSF56801">
    <property type="entry name" value="Acetyl-CoA synthetase-like"/>
    <property type="match status" value="1"/>
</dbReference>
<dbReference type="PROSITE" id="PS00455">
    <property type="entry name" value="AMP_BINDING"/>
    <property type="match status" value="1"/>
</dbReference>
<comment type="function">
    <text evidence="3">Acyl-CoA synthases catalyze the initial reaction in fatty acid metabolism, by forming a thioester with CoA. Has some preference toward medium-chain substrates. Plays a role in adipocyte differentiation.</text>
</comment>
<comment type="catalytic activity">
    <reaction evidence="3">
        <text>a medium-chain fatty acid + ATP + CoA = a medium-chain fatty acyl-CoA + AMP + diphosphate</text>
        <dbReference type="Rhea" id="RHEA:48340"/>
        <dbReference type="ChEBI" id="CHEBI:30616"/>
        <dbReference type="ChEBI" id="CHEBI:33019"/>
        <dbReference type="ChEBI" id="CHEBI:57287"/>
        <dbReference type="ChEBI" id="CHEBI:59558"/>
        <dbReference type="ChEBI" id="CHEBI:90546"/>
        <dbReference type="ChEBI" id="CHEBI:456215"/>
        <dbReference type="EC" id="6.2.1.2"/>
    </reaction>
</comment>
<comment type="catalytic activity">
    <reaction evidence="3">
        <text>octanoate + ATP + CoA = octanoyl-CoA + AMP + diphosphate</text>
        <dbReference type="Rhea" id="RHEA:33631"/>
        <dbReference type="ChEBI" id="CHEBI:25646"/>
        <dbReference type="ChEBI" id="CHEBI:30616"/>
        <dbReference type="ChEBI" id="CHEBI:33019"/>
        <dbReference type="ChEBI" id="CHEBI:57287"/>
        <dbReference type="ChEBI" id="CHEBI:57386"/>
        <dbReference type="ChEBI" id="CHEBI:456215"/>
    </reaction>
</comment>
<comment type="subcellular location">
    <subcellularLocation>
        <location evidence="5">Mitochondrion</location>
    </subcellularLocation>
</comment>
<comment type="similarity">
    <text evidence="5">Belongs to the ATP-dependent AMP-binding enzyme family.</text>
</comment>